<organism>
    <name type="scientific">Brevibacillus brevis (strain 47 / JCM 6285 / NBRC 100599)</name>
    <dbReference type="NCBI Taxonomy" id="358681"/>
    <lineage>
        <taxon>Bacteria</taxon>
        <taxon>Bacillati</taxon>
        <taxon>Bacillota</taxon>
        <taxon>Bacilli</taxon>
        <taxon>Bacillales</taxon>
        <taxon>Paenibacillaceae</taxon>
        <taxon>Brevibacillus</taxon>
    </lineage>
</organism>
<reference key="1">
    <citation type="submission" date="2005-03" db="EMBL/GenBank/DDBJ databases">
        <title>Brevibacillus brevis strain 47, complete genome.</title>
        <authorList>
            <person name="Hosoyama A."/>
            <person name="Yamada R."/>
            <person name="Hongo Y."/>
            <person name="Terui Y."/>
            <person name="Ankai A."/>
            <person name="Masuyama W."/>
            <person name="Sekiguchi M."/>
            <person name="Takeda T."/>
            <person name="Asano K."/>
            <person name="Ohji S."/>
            <person name="Ichikawa N."/>
            <person name="Narita S."/>
            <person name="Aoki N."/>
            <person name="Miura H."/>
            <person name="Matsushita S."/>
            <person name="Sekigawa T."/>
            <person name="Yamagata H."/>
            <person name="Yoshikawa H."/>
            <person name="Udaka S."/>
            <person name="Tanikawa S."/>
            <person name="Fujita N."/>
        </authorList>
    </citation>
    <scope>NUCLEOTIDE SEQUENCE [LARGE SCALE GENOMIC DNA]</scope>
    <source>
        <strain>47 / JCM 6285 / NBRC 100599</strain>
    </source>
</reference>
<comment type="catalytic activity">
    <reaction evidence="1">
        <text>tRNA(Gly) + glycine + ATP = glycyl-tRNA(Gly) + AMP + diphosphate</text>
        <dbReference type="Rhea" id="RHEA:16013"/>
        <dbReference type="Rhea" id="RHEA-COMP:9664"/>
        <dbReference type="Rhea" id="RHEA-COMP:9683"/>
        <dbReference type="ChEBI" id="CHEBI:30616"/>
        <dbReference type="ChEBI" id="CHEBI:33019"/>
        <dbReference type="ChEBI" id="CHEBI:57305"/>
        <dbReference type="ChEBI" id="CHEBI:78442"/>
        <dbReference type="ChEBI" id="CHEBI:78522"/>
        <dbReference type="ChEBI" id="CHEBI:456215"/>
        <dbReference type="EC" id="6.1.1.14"/>
    </reaction>
</comment>
<comment type="subunit">
    <text evidence="1">Tetramer of two alpha and two beta subunits.</text>
</comment>
<comment type="subcellular location">
    <subcellularLocation>
        <location evidence="1">Cytoplasm</location>
    </subcellularLocation>
</comment>
<comment type="similarity">
    <text evidence="1">Belongs to the class-II aminoacyl-tRNA synthetase family.</text>
</comment>
<sequence>MTFQDIILTLQNFWAKQNCLIVQPYDVEKGAGTLNPMTFLRSIGPEPWNVAYVEPSRRPADGRYGENPNRLYQHHQFQVIMKPSPDNIQELYLESLRELGIEPLEHDIRFVEDNWEHPGLGAWGLGWEVWLDGMEITQFTYFQQVGGLECKPVAVELTYGLERLASYIQEKENVFDLEWCNGYTYGDVFLQPEYEHSKYTFELSDVDMLFSLYNTYEAEAKRLMAERLVYPAYDYVLKCSHTFNLLDARGAISVTERTGYIARVRNLSREVAQTYYKERERLGFPLLQKGNADAADQVNQVKGEDTNE</sequence>
<keyword id="KW-0030">Aminoacyl-tRNA synthetase</keyword>
<keyword id="KW-0067">ATP-binding</keyword>
<keyword id="KW-0963">Cytoplasm</keyword>
<keyword id="KW-0436">Ligase</keyword>
<keyword id="KW-0547">Nucleotide-binding</keyword>
<keyword id="KW-0648">Protein biosynthesis</keyword>
<keyword id="KW-1185">Reference proteome</keyword>
<protein>
    <recommendedName>
        <fullName evidence="1">Glycine--tRNA ligase alpha subunit</fullName>
        <ecNumber evidence="1">6.1.1.14</ecNumber>
    </recommendedName>
    <alternativeName>
        <fullName evidence="1">Glycyl-tRNA synthetase alpha subunit</fullName>
        <shortName evidence="1">GlyRS</shortName>
    </alternativeName>
</protein>
<name>SYGA_BREBN</name>
<evidence type="ECO:0000255" key="1">
    <source>
        <dbReference type="HAMAP-Rule" id="MF_00254"/>
    </source>
</evidence>
<proteinExistence type="inferred from homology"/>
<accession>C0ZB87</accession>
<dbReference type="EC" id="6.1.1.14" evidence="1"/>
<dbReference type="EMBL" id="AP008955">
    <property type="protein sequence ID" value="BAH43046.1"/>
    <property type="molecule type" value="Genomic_DNA"/>
</dbReference>
<dbReference type="SMR" id="C0ZB87"/>
<dbReference type="STRING" id="358681.BBR47_20690"/>
<dbReference type="KEGG" id="bbe:BBR47_20690"/>
<dbReference type="eggNOG" id="COG0752">
    <property type="taxonomic scope" value="Bacteria"/>
</dbReference>
<dbReference type="HOGENOM" id="CLU_057066_1_0_9"/>
<dbReference type="Proteomes" id="UP000001877">
    <property type="component" value="Chromosome"/>
</dbReference>
<dbReference type="GO" id="GO:0005829">
    <property type="term" value="C:cytosol"/>
    <property type="evidence" value="ECO:0007669"/>
    <property type="project" value="TreeGrafter"/>
</dbReference>
<dbReference type="GO" id="GO:0005524">
    <property type="term" value="F:ATP binding"/>
    <property type="evidence" value="ECO:0007669"/>
    <property type="project" value="UniProtKB-UniRule"/>
</dbReference>
<dbReference type="GO" id="GO:0140096">
    <property type="term" value="F:catalytic activity, acting on a protein"/>
    <property type="evidence" value="ECO:0007669"/>
    <property type="project" value="UniProtKB-ARBA"/>
</dbReference>
<dbReference type="GO" id="GO:0004820">
    <property type="term" value="F:glycine-tRNA ligase activity"/>
    <property type="evidence" value="ECO:0007669"/>
    <property type="project" value="UniProtKB-UniRule"/>
</dbReference>
<dbReference type="GO" id="GO:0016740">
    <property type="term" value="F:transferase activity"/>
    <property type="evidence" value="ECO:0007669"/>
    <property type="project" value="UniProtKB-ARBA"/>
</dbReference>
<dbReference type="GO" id="GO:0006426">
    <property type="term" value="P:glycyl-tRNA aminoacylation"/>
    <property type="evidence" value="ECO:0007669"/>
    <property type="project" value="UniProtKB-UniRule"/>
</dbReference>
<dbReference type="CDD" id="cd00733">
    <property type="entry name" value="GlyRS_alpha_core"/>
    <property type="match status" value="1"/>
</dbReference>
<dbReference type="FunFam" id="3.30.930.10:FF:000006">
    <property type="entry name" value="Glycine--tRNA ligase alpha subunit"/>
    <property type="match status" value="1"/>
</dbReference>
<dbReference type="Gene3D" id="3.30.930.10">
    <property type="entry name" value="Bira Bifunctional Protein, Domain 2"/>
    <property type="match status" value="1"/>
</dbReference>
<dbReference type="Gene3D" id="1.20.58.180">
    <property type="entry name" value="Class II aaRS and biotin synthetases, domain 2"/>
    <property type="match status" value="1"/>
</dbReference>
<dbReference type="HAMAP" id="MF_00254">
    <property type="entry name" value="Gly_tRNA_synth_alpha"/>
    <property type="match status" value="1"/>
</dbReference>
<dbReference type="InterPro" id="IPR045864">
    <property type="entry name" value="aa-tRNA-synth_II/BPL/LPL"/>
</dbReference>
<dbReference type="InterPro" id="IPR006194">
    <property type="entry name" value="Gly-tRNA-synth_heterodimer"/>
</dbReference>
<dbReference type="InterPro" id="IPR002310">
    <property type="entry name" value="Gly-tRNA_ligase_asu"/>
</dbReference>
<dbReference type="NCBIfam" id="TIGR00388">
    <property type="entry name" value="glyQ"/>
    <property type="match status" value="1"/>
</dbReference>
<dbReference type="NCBIfam" id="NF006827">
    <property type="entry name" value="PRK09348.1"/>
    <property type="match status" value="1"/>
</dbReference>
<dbReference type="PANTHER" id="PTHR30075:SF2">
    <property type="entry name" value="GLYCINE--TRNA LIGASE, CHLOROPLASTIC_MITOCHONDRIAL 2"/>
    <property type="match status" value="1"/>
</dbReference>
<dbReference type="PANTHER" id="PTHR30075">
    <property type="entry name" value="GLYCYL-TRNA SYNTHETASE"/>
    <property type="match status" value="1"/>
</dbReference>
<dbReference type="Pfam" id="PF02091">
    <property type="entry name" value="tRNA-synt_2e"/>
    <property type="match status" value="1"/>
</dbReference>
<dbReference type="PRINTS" id="PR01044">
    <property type="entry name" value="TRNASYNTHGA"/>
</dbReference>
<dbReference type="SUPFAM" id="SSF55681">
    <property type="entry name" value="Class II aaRS and biotin synthetases"/>
    <property type="match status" value="1"/>
</dbReference>
<dbReference type="PROSITE" id="PS50861">
    <property type="entry name" value="AA_TRNA_LIGASE_II_GLYAB"/>
    <property type="match status" value="1"/>
</dbReference>
<gene>
    <name evidence="1" type="primary">glyQ</name>
    <name type="ordered locus">BBR47_20690</name>
</gene>
<feature type="chain" id="PRO_1000125537" description="Glycine--tRNA ligase alpha subunit">
    <location>
        <begin position="1"/>
        <end position="308"/>
    </location>
</feature>